<gene>
    <name evidence="1" type="primary">rpsZ</name>
    <name evidence="1" type="synonym">rpsN</name>
    <name type="ordered locus">EUBELI_00312</name>
</gene>
<evidence type="ECO:0000255" key="1">
    <source>
        <dbReference type="HAMAP-Rule" id="MF_01364"/>
    </source>
</evidence>
<evidence type="ECO:0000305" key="2"/>
<feature type="chain" id="PRO_1000214911" description="Small ribosomal subunit protein uS14">
    <location>
        <begin position="1"/>
        <end position="61"/>
    </location>
</feature>
<feature type="binding site" evidence="1">
    <location>
        <position position="24"/>
    </location>
    <ligand>
        <name>Zn(2+)</name>
        <dbReference type="ChEBI" id="CHEBI:29105"/>
    </ligand>
</feature>
<feature type="binding site" evidence="1">
    <location>
        <position position="27"/>
    </location>
    <ligand>
        <name>Zn(2+)</name>
        <dbReference type="ChEBI" id="CHEBI:29105"/>
    </ligand>
</feature>
<feature type="binding site" evidence="1">
    <location>
        <position position="40"/>
    </location>
    <ligand>
        <name>Zn(2+)</name>
        <dbReference type="ChEBI" id="CHEBI:29105"/>
    </ligand>
</feature>
<feature type="binding site" evidence="1">
    <location>
        <position position="43"/>
    </location>
    <ligand>
        <name>Zn(2+)</name>
        <dbReference type="ChEBI" id="CHEBI:29105"/>
    </ligand>
</feature>
<name>RS14Z_LACE2</name>
<reference key="1">
    <citation type="journal article" date="2009" name="Proc. Natl. Acad. Sci. U.S.A.">
        <title>Characterizing a model human gut microbiota composed of members of its two dominant bacterial phyla.</title>
        <authorList>
            <person name="Mahowald M.A."/>
            <person name="Rey F.E."/>
            <person name="Seedorf H."/>
            <person name="Turnbaugh P.J."/>
            <person name="Fulton R.S."/>
            <person name="Wollam A."/>
            <person name="Shah N."/>
            <person name="Wang C."/>
            <person name="Magrini V."/>
            <person name="Wilson R.K."/>
            <person name="Cantarel B.L."/>
            <person name="Coutinho P.M."/>
            <person name="Henrissat B."/>
            <person name="Crock L.W."/>
            <person name="Russell A."/>
            <person name="Verberkmoes N.C."/>
            <person name="Hettich R.L."/>
            <person name="Gordon J.I."/>
        </authorList>
    </citation>
    <scope>NUCLEOTIDE SEQUENCE [LARGE SCALE GENOMIC DNA]</scope>
    <source>
        <strain>ATCC 27750 / DSM 3376 / VPI C15-48 / C15-B4</strain>
    </source>
</reference>
<sequence length="61" mass="7036">MAKTSMKVKQQRAPKFSTRAYTRCTICGRPHSVLRKYGICRICFRELAYKGQIPGVKKASW</sequence>
<keyword id="KW-0479">Metal-binding</keyword>
<keyword id="KW-1185">Reference proteome</keyword>
<keyword id="KW-0687">Ribonucleoprotein</keyword>
<keyword id="KW-0689">Ribosomal protein</keyword>
<keyword id="KW-0694">RNA-binding</keyword>
<keyword id="KW-0699">rRNA-binding</keyword>
<keyword id="KW-0862">Zinc</keyword>
<proteinExistence type="inferred from homology"/>
<protein>
    <recommendedName>
        <fullName evidence="1">Small ribosomal subunit protein uS14</fullName>
    </recommendedName>
    <alternativeName>
        <fullName evidence="2">30S ribosomal protein S14 type Z</fullName>
    </alternativeName>
</protein>
<accession>C4Z2U3</accession>
<comment type="function">
    <text evidence="1">Binds 16S rRNA, required for the assembly of 30S particles and may also be responsible for determining the conformation of the 16S rRNA at the A site.</text>
</comment>
<comment type="cofactor">
    <cofactor evidence="1">
        <name>Zn(2+)</name>
        <dbReference type="ChEBI" id="CHEBI:29105"/>
    </cofactor>
    <text evidence="1">Binds 1 zinc ion per subunit.</text>
</comment>
<comment type="subunit">
    <text evidence="1">Part of the 30S ribosomal subunit. Contacts proteins S3 and S10.</text>
</comment>
<comment type="similarity">
    <text evidence="1">Belongs to the universal ribosomal protein uS14 family. Zinc-binding uS14 subfamily.</text>
</comment>
<organism>
    <name type="scientific">Lachnospira eligens (strain ATCC 27750 / DSM 3376 / VPI C15-48 / C15-B4)</name>
    <name type="common">Eubacterium eligens</name>
    <dbReference type="NCBI Taxonomy" id="515620"/>
    <lineage>
        <taxon>Bacteria</taxon>
        <taxon>Bacillati</taxon>
        <taxon>Bacillota</taxon>
        <taxon>Clostridia</taxon>
        <taxon>Lachnospirales</taxon>
        <taxon>Lachnospiraceae</taxon>
        <taxon>Lachnospira</taxon>
    </lineage>
</organism>
<dbReference type="EMBL" id="CP001104">
    <property type="protein sequence ID" value="ACR71348.1"/>
    <property type="molecule type" value="Genomic_DNA"/>
</dbReference>
<dbReference type="RefSeq" id="WP_012738585.1">
    <property type="nucleotide sequence ID" value="NC_012778.1"/>
</dbReference>
<dbReference type="SMR" id="C4Z2U3"/>
<dbReference type="STRING" id="515620.EUBELI_00312"/>
<dbReference type="GeneID" id="41355085"/>
<dbReference type="KEGG" id="eel:EUBELI_00312"/>
<dbReference type="eggNOG" id="COG0199">
    <property type="taxonomic scope" value="Bacteria"/>
</dbReference>
<dbReference type="HOGENOM" id="CLU_139869_3_0_9"/>
<dbReference type="Proteomes" id="UP000001476">
    <property type="component" value="Chromosome"/>
</dbReference>
<dbReference type="GO" id="GO:0005737">
    <property type="term" value="C:cytoplasm"/>
    <property type="evidence" value="ECO:0007669"/>
    <property type="project" value="UniProtKB-ARBA"/>
</dbReference>
<dbReference type="GO" id="GO:0015935">
    <property type="term" value="C:small ribosomal subunit"/>
    <property type="evidence" value="ECO:0007669"/>
    <property type="project" value="TreeGrafter"/>
</dbReference>
<dbReference type="GO" id="GO:0019843">
    <property type="term" value="F:rRNA binding"/>
    <property type="evidence" value="ECO:0007669"/>
    <property type="project" value="UniProtKB-UniRule"/>
</dbReference>
<dbReference type="GO" id="GO:0003735">
    <property type="term" value="F:structural constituent of ribosome"/>
    <property type="evidence" value="ECO:0007669"/>
    <property type="project" value="InterPro"/>
</dbReference>
<dbReference type="GO" id="GO:0008270">
    <property type="term" value="F:zinc ion binding"/>
    <property type="evidence" value="ECO:0007669"/>
    <property type="project" value="UniProtKB-UniRule"/>
</dbReference>
<dbReference type="GO" id="GO:0006412">
    <property type="term" value="P:translation"/>
    <property type="evidence" value="ECO:0007669"/>
    <property type="project" value="UniProtKB-UniRule"/>
</dbReference>
<dbReference type="FunFam" id="4.10.830.10:FF:000001">
    <property type="entry name" value="30S ribosomal protein S14 type Z"/>
    <property type="match status" value="1"/>
</dbReference>
<dbReference type="Gene3D" id="4.10.830.10">
    <property type="entry name" value="30s Ribosomal Protein S14, Chain N"/>
    <property type="match status" value="1"/>
</dbReference>
<dbReference type="HAMAP" id="MF_01364_B">
    <property type="entry name" value="Ribosomal_uS14_2_B"/>
    <property type="match status" value="1"/>
</dbReference>
<dbReference type="InterPro" id="IPR001209">
    <property type="entry name" value="Ribosomal_uS14"/>
</dbReference>
<dbReference type="InterPro" id="IPR023053">
    <property type="entry name" value="Ribosomal_uS14_bact"/>
</dbReference>
<dbReference type="InterPro" id="IPR043140">
    <property type="entry name" value="Ribosomal_uS14_sf"/>
</dbReference>
<dbReference type="NCBIfam" id="NF005974">
    <property type="entry name" value="PRK08061.1"/>
    <property type="match status" value="1"/>
</dbReference>
<dbReference type="PANTHER" id="PTHR19836">
    <property type="entry name" value="30S RIBOSOMAL PROTEIN S14"/>
    <property type="match status" value="1"/>
</dbReference>
<dbReference type="PANTHER" id="PTHR19836:SF19">
    <property type="entry name" value="SMALL RIBOSOMAL SUBUNIT PROTEIN US14M"/>
    <property type="match status" value="1"/>
</dbReference>
<dbReference type="Pfam" id="PF00253">
    <property type="entry name" value="Ribosomal_S14"/>
    <property type="match status" value="1"/>
</dbReference>
<dbReference type="SUPFAM" id="SSF57716">
    <property type="entry name" value="Glucocorticoid receptor-like (DNA-binding domain)"/>
    <property type="match status" value="1"/>
</dbReference>